<dbReference type="EC" id="1.11.1.24" evidence="3 10"/>
<dbReference type="EMBL" id="U22446">
    <property type="protein sequence ID" value="AAA64283.1"/>
    <property type="molecule type" value="Genomic_DNA"/>
</dbReference>
<dbReference type="EMBL" id="Z38061">
    <property type="protein sequence ID" value="CAA86197.1"/>
    <property type="molecule type" value="Genomic_DNA"/>
</dbReference>
<dbReference type="EMBL" id="BK006942">
    <property type="protein sequence ID" value="DAA08584.1"/>
    <property type="molecule type" value="Genomic_DNA"/>
</dbReference>
<dbReference type="PIR" id="S48499">
    <property type="entry name" value="S48499"/>
</dbReference>
<dbReference type="RefSeq" id="NP_012303.1">
    <property type="nucleotide sequence ID" value="NM_001179559.1"/>
</dbReference>
<dbReference type="PDB" id="3CMI">
    <property type="method" value="X-ray"/>
    <property type="resolution" value="2.02 A"/>
    <property type="chains" value="A=1-163"/>
</dbReference>
<dbReference type="PDBsum" id="3CMI"/>
<dbReference type="SMR" id="P40581"/>
<dbReference type="BioGRID" id="35028">
    <property type="interactions" value="107"/>
</dbReference>
<dbReference type="DIP" id="DIP-1275N"/>
<dbReference type="FunCoup" id="P40581">
    <property type="interactions" value="584"/>
</dbReference>
<dbReference type="IntAct" id="P40581">
    <property type="interactions" value="15"/>
</dbReference>
<dbReference type="MINT" id="P40581"/>
<dbReference type="STRING" id="4932.YIR037W"/>
<dbReference type="PeroxiBase" id="3742">
    <property type="entry name" value="SceGPx03"/>
</dbReference>
<dbReference type="iPTMnet" id="P40581"/>
<dbReference type="PaxDb" id="4932-YIR037W"/>
<dbReference type="PeptideAtlas" id="P40581"/>
<dbReference type="TopDownProteomics" id="P40581"/>
<dbReference type="EnsemblFungi" id="YIR037W_mRNA">
    <property type="protein sequence ID" value="YIR037W"/>
    <property type="gene ID" value="YIR037W"/>
</dbReference>
<dbReference type="GeneID" id="854855"/>
<dbReference type="KEGG" id="sce:YIR037W"/>
<dbReference type="AGR" id="SGD:S000001476"/>
<dbReference type="SGD" id="S000001476">
    <property type="gene designation" value="HYR1"/>
</dbReference>
<dbReference type="VEuPathDB" id="FungiDB:YIR037W"/>
<dbReference type="eggNOG" id="KOG1651">
    <property type="taxonomic scope" value="Eukaryota"/>
</dbReference>
<dbReference type="GeneTree" id="ENSGT00940000165680"/>
<dbReference type="HOGENOM" id="CLU_029507_2_2_1"/>
<dbReference type="InParanoid" id="P40581"/>
<dbReference type="OMA" id="TFPMTEK"/>
<dbReference type="OrthoDB" id="446890at2759"/>
<dbReference type="BioCyc" id="YEAST:YIR037W-MONOMER"/>
<dbReference type="BioGRID-ORCS" id="854855">
    <property type="hits" value="3 hits in 10 CRISPR screens"/>
</dbReference>
<dbReference type="EvolutionaryTrace" id="P40581"/>
<dbReference type="PRO" id="PR:P40581"/>
<dbReference type="Proteomes" id="UP000002311">
    <property type="component" value="Chromosome IX"/>
</dbReference>
<dbReference type="RNAct" id="P40581">
    <property type="molecule type" value="protein"/>
</dbReference>
<dbReference type="GO" id="GO:0005829">
    <property type="term" value="C:cytosol"/>
    <property type="evidence" value="ECO:0007005"/>
    <property type="project" value="SGD"/>
</dbReference>
<dbReference type="GO" id="GO:0005758">
    <property type="term" value="C:mitochondrial intermembrane space"/>
    <property type="evidence" value="ECO:0000314"/>
    <property type="project" value="SGD"/>
</dbReference>
<dbReference type="GO" id="GO:0005739">
    <property type="term" value="C:mitochondrion"/>
    <property type="evidence" value="ECO:0007005"/>
    <property type="project" value="SGD"/>
</dbReference>
<dbReference type="GO" id="GO:0005782">
    <property type="term" value="C:peroxisomal matrix"/>
    <property type="evidence" value="ECO:0000314"/>
    <property type="project" value="SGD"/>
</dbReference>
<dbReference type="GO" id="GO:0004602">
    <property type="term" value="F:glutathione peroxidase activity"/>
    <property type="evidence" value="ECO:0000314"/>
    <property type="project" value="SGD"/>
</dbReference>
<dbReference type="GO" id="GO:0047066">
    <property type="term" value="F:phospholipid-hydroperoxide glutathione peroxidase activity"/>
    <property type="evidence" value="ECO:0000314"/>
    <property type="project" value="SGD"/>
</dbReference>
<dbReference type="GO" id="GO:0140824">
    <property type="term" value="F:thioredoxin-dependent peroxiredoxin activity"/>
    <property type="evidence" value="ECO:0007669"/>
    <property type="project" value="UniProtKB-EC"/>
</dbReference>
<dbReference type="GO" id="GO:0034599">
    <property type="term" value="P:cellular response to oxidative stress"/>
    <property type="evidence" value="ECO:0000315"/>
    <property type="project" value="SGD"/>
</dbReference>
<dbReference type="CDD" id="cd00340">
    <property type="entry name" value="GSH_Peroxidase"/>
    <property type="match status" value="1"/>
</dbReference>
<dbReference type="FunFam" id="3.40.30.10:FF:000010">
    <property type="entry name" value="Glutathione peroxidase"/>
    <property type="match status" value="1"/>
</dbReference>
<dbReference type="Gene3D" id="3.40.30.10">
    <property type="entry name" value="Glutaredoxin"/>
    <property type="match status" value="1"/>
</dbReference>
<dbReference type="InterPro" id="IPR000889">
    <property type="entry name" value="Glutathione_peroxidase"/>
</dbReference>
<dbReference type="InterPro" id="IPR029759">
    <property type="entry name" value="GPX_AS"/>
</dbReference>
<dbReference type="InterPro" id="IPR029760">
    <property type="entry name" value="GPX_CS"/>
</dbReference>
<dbReference type="InterPro" id="IPR036249">
    <property type="entry name" value="Thioredoxin-like_sf"/>
</dbReference>
<dbReference type="InterPro" id="IPR013766">
    <property type="entry name" value="Thioredoxin_domain"/>
</dbReference>
<dbReference type="PANTHER" id="PTHR11592">
    <property type="entry name" value="GLUTATHIONE PEROXIDASE"/>
    <property type="match status" value="1"/>
</dbReference>
<dbReference type="PANTHER" id="PTHR11592:SF78">
    <property type="entry name" value="GLUTATHIONE PEROXIDASE"/>
    <property type="match status" value="1"/>
</dbReference>
<dbReference type="Pfam" id="PF00255">
    <property type="entry name" value="GSHPx"/>
    <property type="match status" value="1"/>
</dbReference>
<dbReference type="PIRSF" id="PIRSF000303">
    <property type="entry name" value="Glutathion_perox"/>
    <property type="match status" value="1"/>
</dbReference>
<dbReference type="PRINTS" id="PR01011">
    <property type="entry name" value="GLUTPROXDASE"/>
</dbReference>
<dbReference type="SUPFAM" id="SSF52833">
    <property type="entry name" value="Thioredoxin-like"/>
    <property type="match status" value="1"/>
</dbReference>
<dbReference type="PROSITE" id="PS00460">
    <property type="entry name" value="GLUTATHIONE_PEROXID_1"/>
    <property type="match status" value="1"/>
</dbReference>
<dbReference type="PROSITE" id="PS00763">
    <property type="entry name" value="GLUTATHIONE_PEROXID_2"/>
    <property type="match status" value="1"/>
</dbReference>
<dbReference type="PROSITE" id="PS51355">
    <property type="entry name" value="GLUTATHIONE_PEROXID_3"/>
    <property type="match status" value="1"/>
</dbReference>
<sequence>MSEFYKLAPVDKKGQPFPFDQLKGKVVLIVNVASKCGFTPQYKELEALYKRYKDEGFTIIGFPCNQFGHQEPGSDEEIAQFCQLNYGVTFPIMKKIDVNGGNEDPVYKFLKSQKSGMLGLRGIKWNFEKFLVDKKGKVYERYSSLTKPSSLSETIEELLKEVE</sequence>
<protein>
    <recommendedName>
        <fullName evidence="19">Glutathione peroxidase-like peroxiredoxin HYR1</fullName>
        <ecNumber evidence="3 10">1.11.1.24</ecNumber>
    </recommendedName>
    <alternativeName>
        <fullName evidence="15">Glutathione peroxidase homolog 3</fullName>
        <shortName>GPx 3</shortName>
    </alternativeName>
    <alternativeName>
        <fullName evidence="18">Hydrogen peroxide resistance protein 1</fullName>
    </alternativeName>
    <alternativeName>
        <fullName evidence="16">Oxidant receptor peroxidase 1</fullName>
    </alternativeName>
    <alternativeName>
        <fullName evidence="17">Phospholipid hydroperoxide glutathione peroxidase 3</fullName>
        <shortName>PHGPx3</shortName>
    </alternativeName>
</protein>
<gene>
    <name evidence="18" type="primary">HYR1</name>
    <name evidence="15" type="synonym">GPX3</name>
    <name evidence="16" type="synonym">ORP1</name>
    <name evidence="25" type="ordered locus">YIR037W</name>
</gene>
<accession>P40581</accession>
<accession>D6VVW8</accession>
<proteinExistence type="evidence at protein level"/>
<evidence type="ECO:0000269" key="1">
    <source>
    </source>
</evidence>
<evidence type="ECO:0000269" key="2">
    <source>
    </source>
</evidence>
<evidence type="ECO:0000269" key="3">
    <source>
    </source>
</evidence>
<evidence type="ECO:0000269" key="4">
    <source>
    </source>
</evidence>
<evidence type="ECO:0000269" key="5">
    <source>
    </source>
</evidence>
<evidence type="ECO:0000269" key="6">
    <source>
    </source>
</evidence>
<evidence type="ECO:0000269" key="7">
    <source>
    </source>
</evidence>
<evidence type="ECO:0000269" key="8">
    <source>
    </source>
</evidence>
<evidence type="ECO:0000269" key="9">
    <source>
    </source>
</evidence>
<evidence type="ECO:0000269" key="10">
    <source>
    </source>
</evidence>
<evidence type="ECO:0000269" key="11">
    <source>
    </source>
</evidence>
<evidence type="ECO:0000269" key="12">
    <source>
    </source>
</evidence>
<evidence type="ECO:0000269" key="13">
    <source>
    </source>
</evidence>
<evidence type="ECO:0000269" key="14">
    <source>
    </source>
</evidence>
<evidence type="ECO:0000303" key="15">
    <source>
    </source>
</evidence>
<evidence type="ECO:0000303" key="16">
    <source>
    </source>
</evidence>
<evidence type="ECO:0000303" key="17">
    <source>
    </source>
</evidence>
<evidence type="ECO:0000303" key="18">
    <source ref="1"/>
</evidence>
<evidence type="ECO:0000305" key="19"/>
<evidence type="ECO:0000305" key="20">
    <source>
    </source>
</evidence>
<evidence type="ECO:0000305" key="21">
    <source>
    </source>
</evidence>
<evidence type="ECO:0000305" key="22">
    <source>
    </source>
</evidence>
<evidence type="ECO:0000305" key="23">
    <source>
    </source>
</evidence>
<evidence type="ECO:0000305" key="24">
    <source>
    </source>
</evidence>
<evidence type="ECO:0000312" key="25">
    <source>
        <dbReference type="SGD" id="S000001476"/>
    </source>
</evidence>
<evidence type="ECO:0007829" key="26">
    <source>
        <dbReference type="PDB" id="3CMI"/>
    </source>
</evidence>
<name>GPX3_YEAST</name>
<organism>
    <name type="scientific">Saccharomyces cerevisiae (strain ATCC 204508 / S288c)</name>
    <name type="common">Baker's yeast</name>
    <dbReference type="NCBI Taxonomy" id="559292"/>
    <lineage>
        <taxon>Eukaryota</taxon>
        <taxon>Fungi</taxon>
        <taxon>Dikarya</taxon>
        <taxon>Ascomycota</taxon>
        <taxon>Saccharomycotina</taxon>
        <taxon>Saccharomycetes</taxon>
        <taxon>Saccharomycetales</taxon>
        <taxon>Saccharomycetaceae</taxon>
        <taxon>Saccharomyces</taxon>
    </lineage>
</organism>
<keyword id="KW-0002">3D-structure</keyword>
<keyword id="KW-0049">Antioxidant</keyword>
<keyword id="KW-0963">Cytoplasm</keyword>
<keyword id="KW-1015">Disulfide bond</keyword>
<keyword id="KW-0496">Mitochondrion</keyword>
<keyword id="KW-0560">Oxidoreductase</keyword>
<keyword id="KW-0575">Peroxidase</keyword>
<keyword id="KW-0576">Peroxisome</keyword>
<keyword id="KW-0676">Redox-active center</keyword>
<keyword id="KW-1185">Reference proteome</keyword>
<comment type="function">
    <text evidence="1 2 3 4 5 8 9 11 14">Involved in oxidative stress response and redox homeostasis. Functions as a sensor and transducer of hydroperoxide stress. In response to hydroperoxide stress it oxidizes (activates) the transcription activator YAP1, which is involved in transcription activation of genes of the oxidative stress response pathway. May also play a direct role in hydroperoxide scavenging, being the most active of three closely related S.cerevisiae peroxiredoxins (GPX1, GPX2, and HYR1/GPX3) with respect to peroxide and lipid hydroperoxide reduction. The three enzymes are not required for the glutaredoxin-mediated antioxidant function. In the presence of peroxides, HYR1/GPX3 is directly oxidized at Cys-36 to form a cysteine sulfenic acid (-SOH). Cys-36-SOH then forms either an intramolecular disulfide bond (Cys-36 with Cys-82) or a transient, intermolecular disulfide bond with 'Cys-598' of YAP1, which is further resolved into a YAP1 intramolecular disulfide bond ('Cys-303' with 'Cys-598'), which causes its nuclear accumulation and activation, and a reduced Cys-36 in HYR1/GPX3.</text>
</comment>
<comment type="catalytic activity">
    <reaction evidence="3 10">
        <text>a hydroperoxide + [thioredoxin]-dithiol = an alcohol + [thioredoxin]-disulfide + H2O</text>
        <dbReference type="Rhea" id="RHEA:62620"/>
        <dbReference type="Rhea" id="RHEA-COMP:10698"/>
        <dbReference type="Rhea" id="RHEA-COMP:10700"/>
        <dbReference type="ChEBI" id="CHEBI:15377"/>
        <dbReference type="ChEBI" id="CHEBI:29950"/>
        <dbReference type="ChEBI" id="CHEBI:30879"/>
        <dbReference type="ChEBI" id="CHEBI:35924"/>
        <dbReference type="ChEBI" id="CHEBI:50058"/>
        <dbReference type="EC" id="1.11.1.24"/>
    </reaction>
</comment>
<comment type="subunit">
    <text evidence="4">Interacts with YAP1 and probably YBP1.</text>
</comment>
<comment type="subcellular location">
    <subcellularLocation>
        <location evidence="6">Cytoplasm</location>
    </subcellularLocation>
    <subcellularLocation>
        <location evidence="13">Mitochondrion intermembrane space</location>
    </subcellularLocation>
    <subcellularLocation>
        <location evidence="12">Peroxisome matrix</location>
    </subcellularLocation>
</comment>
<comment type="induction">
    <text evidence="1">In contrast to the other two peroxiredoxins, HYR1/GPX3 expression is constitutive, not stress-induced.</text>
</comment>
<comment type="disruption phenotype">
    <text evidence="1">Sensitive to hydrogen peroxide and tert-butyl hydroperoxide (t-BHP).</text>
</comment>
<comment type="miscellaneous">
    <text evidence="7">Present with 8000 molecules/cell in log phase SD medium.</text>
</comment>
<comment type="miscellaneous">
    <text evidence="23">The active site is a conserved redox-active cysteine residue, the peroxidatic cysteine (C(P)), which makes the nucleophilic attack on the peroxide substrate. The peroxide oxidizes the C(P)-SH to cysteine sulfenic acid (C(P)-SOH), which then reacts with another cysteine residue, the resolving cysteine (C(R)), to form a disulfide bridge. The disulfide is subsequently reduced by an appropriate electron donor to complete the catalytic cycle. In this atypical 2-Cys peroxiredoxin, C(R) is present in the same subunit to form an intramolecular disulfide.</text>
</comment>
<comment type="similarity">
    <text evidence="19">Belongs to the glutathione peroxidase family.</text>
</comment>
<comment type="caution">
    <text evidence="20 21 22">Was originally thought to be a glutathione peroxidase (PubMed:10480913) or a phospholipid hydroperoxide glutathione peroxidase (PubMed:11445588), but functions as an atypical 2-Cys peroxiredoxin using thioredoxin as reducing power instead (PubMed:12437921).</text>
</comment>
<feature type="chain" id="PRO_0000066643" description="Glutathione peroxidase-like peroxiredoxin HYR1">
    <location>
        <begin position="1"/>
        <end position="163"/>
    </location>
</feature>
<feature type="active site" description="Cysteine sulfenic acid (-SOH) intermediate" evidence="9 24">
    <location>
        <position position="36"/>
    </location>
</feature>
<feature type="disulfide bond" description="Redox-active" evidence="24">
    <location>
        <begin position="36"/>
        <end position="82"/>
    </location>
</feature>
<feature type="disulfide bond" description="Interchain (with C-598 in YAP1); transient" evidence="3 9">
    <location>
        <position position="36"/>
    </location>
</feature>
<feature type="mutagenesis site" description="Loss of enzyme activity." evidence="10">
    <original>C</original>
    <variation>S</variation>
    <location>
        <position position="82"/>
    </location>
</feature>
<feature type="helix" evidence="26">
    <location>
        <begin position="3"/>
        <end position="6"/>
    </location>
</feature>
<feature type="helix" evidence="26">
    <location>
        <begin position="19"/>
        <end position="22"/>
    </location>
</feature>
<feature type="strand" evidence="26">
    <location>
        <begin position="26"/>
        <end position="36"/>
    </location>
</feature>
<feature type="helix" evidence="26">
    <location>
        <begin position="39"/>
        <end position="52"/>
    </location>
</feature>
<feature type="helix" evidence="26">
    <location>
        <begin position="53"/>
        <end position="55"/>
    </location>
</feature>
<feature type="strand" evidence="26">
    <location>
        <begin position="57"/>
        <end position="64"/>
    </location>
</feature>
<feature type="strand" evidence="26">
    <location>
        <begin position="97"/>
        <end position="100"/>
    </location>
</feature>
<feature type="helix" evidence="26">
    <location>
        <begin position="105"/>
        <end position="113"/>
    </location>
</feature>
<feature type="strand" evidence="26">
    <location>
        <begin position="117"/>
        <end position="119"/>
    </location>
</feature>
<feature type="strand" evidence="26">
    <location>
        <begin position="129"/>
        <end position="132"/>
    </location>
</feature>
<feature type="strand" evidence="26">
    <location>
        <begin position="134"/>
        <end position="136"/>
    </location>
</feature>
<feature type="strand" evidence="26">
    <location>
        <begin position="138"/>
        <end position="142"/>
    </location>
</feature>
<feature type="helix" evidence="26">
    <location>
        <begin position="148"/>
        <end position="151"/>
    </location>
</feature>
<feature type="helix" evidence="26">
    <location>
        <begin position="152"/>
        <end position="159"/>
    </location>
</feature>
<reference key="1">
    <citation type="submission" date="1995-03" db="EMBL/GenBank/DDBJ databases">
        <title>Cloning and phenotypic characterization of a glutathione-peroxidase like gene involved in the oxidative stress response of Saccharomyces cerevisiae.</title>
        <authorList>
            <person name="Budde E."/>
            <person name="Stahl U."/>
        </authorList>
    </citation>
    <scope>NUCLEOTIDE SEQUENCE [GENOMIC DNA]</scope>
    <source>
        <strain>ATCC 38626 / AH22 / NRRL Y-12843</strain>
    </source>
</reference>
<reference key="2">
    <citation type="journal article" date="1997" name="Nature">
        <title>The nucleotide sequence of Saccharomyces cerevisiae chromosome IX.</title>
        <authorList>
            <person name="Churcher C.M."/>
            <person name="Bowman S."/>
            <person name="Badcock K."/>
            <person name="Bankier A.T."/>
            <person name="Brown D."/>
            <person name="Chillingworth T."/>
            <person name="Connor R."/>
            <person name="Devlin K."/>
            <person name="Gentles S."/>
            <person name="Hamlin N."/>
            <person name="Harris D.E."/>
            <person name="Horsnell T."/>
            <person name="Hunt S."/>
            <person name="Jagels K."/>
            <person name="Jones M."/>
            <person name="Lye G."/>
            <person name="Moule S."/>
            <person name="Odell C."/>
            <person name="Pearson D."/>
            <person name="Rajandream M.A."/>
            <person name="Rice P."/>
            <person name="Rowley N."/>
            <person name="Skelton J."/>
            <person name="Smith V."/>
            <person name="Walsh S.V."/>
            <person name="Whitehead S."/>
            <person name="Barrell B.G."/>
        </authorList>
    </citation>
    <scope>NUCLEOTIDE SEQUENCE [LARGE SCALE GENOMIC DNA]</scope>
    <source>
        <strain>ATCC 204508 / S288c</strain>
    </source>
</reference>
<reference key="3">
    <citation type="journal article" date="2014" name="G3 (Bethesda)">
        <title>The reference genome sequence of Saccharomyces cerevisiae: Then and now.</title>
        <authorList>
            <person name="Engel S.R."/>
            <person name="Dietrich F.S."/>
            <person name="Fisk D.G."/>
            <person name="Binkley G."/>
            <person name="Balakrishnan R."/>
            <person name="Costanzo M.C."/>
            <person name="Dwight S.S."/>
            <person name="Hitz B.C."/>
            <person name="Karra K."/>
            <person name="Nash R.S."/>
            <person name="Weng S."/>
            <person name="Wong E.D."/>
            <person name="Lloyd P."/>
            <person name="Skrzypek M.S."/>
            <person name="Miyasato S.R."/>
            <person name="Simison M."/>
            <person name="Cherry J.M."/>
        </authorList>
    </citation>
    <scope>GENOME REANNOTATION</scope>
    <source>
        <strain>ATCC 204508 / S288c</strain>
    </source>
</reference>
<reference key="4">
    <citation type="journal article" date="1997" name="Biomed. Environ. Sci.">
        <title>Phospholipid hydroperoxide glutathione peroxidase (PHGPx): more than an antioxidant enzyme?</title>
        <authorList>
            <person name="Ursini F."/>
            <person name="Maiorino M."/>
            <person name="Roveri A."/>
        </authorList>
    </citation>
    <scope>FUNCTION</scope>
</reference>
<reference key="5">
    <citation type="journal article" date="1999" name="J. Biol. Chem.">
        <title>Genetic analysis of glutathione peroxidase in oxidative stress response of Saccharomyces cerevisiae.</title>
        <authorList>
            <person name="Inoue Y."/>
            <person name="Matsuda T."/>
            <person name="Sugiyama K."/>
            <person name="Izawa S."/>
            <person name="Kimura A."/>
        </authorList>
    </citation>
    <scope>FUNCTION</scope>
    <scope>INDUCTION</scope>
    <scope>DISRUPTION PHENOTYPE</scope>
</reference>
<reference key="6">
    <citation type="journal article" date="2001" name="J. Biol. Chem.">
        <title>Saccharomyces cerevisiae expresses three phospholipid hydroperoxide glutathione peroxidases.</title>
        <authorList>
            <person name="Avery A.M."/>
            <person name="Avery S.V."/>
        </authorList>
    </citation>
    <scope>FUNCTION</scope>
</reference>
<reference key="7">
    <citation type="journal article" date="2002" name="Cell">
        <title>A thiol peroxidase is an H2O2 receptor and redox-transducer in gene activation.</title>
        <authorList>
            <person name="Delaunay A."/>
            <person name="Pflieger D."/>
            <person name="Barrault M.-B."/>
            <person name="Vinh J."/>
            <person name="Toledano M.B."/>
        </authorList>
    </citation>
    <scope>FUNCTION</scope>
    <scope>CATALYTIC ACTIVITY</scope>
    <scope>OXIDATION OF YAP1</scope>
</reference>
<reference key="8">
    <citation type="journal article" date="2003" name="J. Biol. Chem.">
        <title>Ybp1 is required for the hydrogen peroxide-induced oxidation of the Yap1 transcription factor.</title>
        <authorList>
            <person name="Veal E.A."/>
            <person name="Ross S.J."/>
            <person name="Malakasi P."/>
            <person name="Peacock E."/>
            <person name="Morgan B.A."/>
        </authorList>
    </citation>
    <scope>FUNCTION</scope>
    <scope>INTERACTION WITH YBP1</scope>
</reference>
<reference key="9">
    <citation type="journal article" date="2003" name="Free Radic. Biol. Med.">
        <title>Two redox centers within Yap1 for H2O2 and thiol-reactive chemicals signaling.</title>
        <authorList>
            <person name="Azevedo D."/>
            <person name="Tacnet F."/>
            <person name="Delaunay A."/>
            <person name="Rodrigues-Pousada C."/>
            <person name="Toledano M.B."/>
        </authorList>
    </citation>
    <scope>FUNCTION</scope>
    <scope>ACTIVATING SUBSTANCES</scope>
</reference>
<reference key="10">
    <citation type="journal article" date="2003" name="Nature">
        <title>Global analysis of protein localization in budding yeast.</title>
        <authorList>
            <person name="Huh W.-K."/>
            <person name="Falvo J.V."/>
            <person name="Gerke L.C."/>
            <person name="Carroll A.S."/>
            <person name="Howson R.W."/>
            <person name="Weissman J.S."/>
            <person name="O'Shea E.K."/>
        </authorList>
    </citation>
    <scope>SUBCELLULAR LOCATION [LARGE SCALE ANALYSIS]</scope>
</reference>
<reference key="11">
    <citation type="journal article" date="2003" name="Nature">
        <title>Global analysis of protein expression in yeast.</title>
        <authorList>
            <person name="Ghaemmaghami S."/>
            <person name="Huh W.-K."/>
            <person name="Bower K."/>
            <person name="Howson R.W."/>
            <person name="Belle A."/>
            <person name="Dephoure N."/>
            <person name="O'Shea E.K."/>
            <person name="Weissman J.S."/>
        </authorList>
    </citation>
    <scope>LEVEL OF PROTEIN EXPRESSION [LARGE SCALE ANALYSIS]</scope>
</reference>
<reference key="12">
    <citation type="journal article" date="2004" name="J. Biol. Chem.">
        <title>Genetic dissection of the phospholipid hydroperoxidase activity of yeast gpx3 reveals its functional importance.</title>
        <authorList>
            <person name="Avery A.M."/>
            <person name="Willetts S.A."/>
            <person name="Avery S.V."/>
        </authorList>
    </citation>
    <scope>FUNCTION</scope>
</reference>
<reference key="13">
    <citation type="journal article" date="2007" name="J. Biol. Chem.">
        <title>Molecular mechanism of oxidative stress perception by the Orp1 protein.</title>
        <authorList>
            <person name="Ma L.H."/>
            <person name="Takanishi C.L."/>
            <person name="Wood M.J."/>
        </authorList>
    </citation>
    <scope>FUNCTION</scope>
    <scope>ACTIVE SITE</scope>
</reference>
<reference key="14">
    <citation type="journal article" date="2009" name="Chem. Biol.">
        <title>Chemical dissection of an essential redox switch in yeast.</title>
        <authorList>
            <person name="Paulsen C.E."/>
            <person name="Carroll K.S."/>
        </authorList>
    </citation>
    <scope>FUNCTION</scope>
</reference>
<reference key="15">
    <citation type="journal article" date="2012" name="Biochim. Biophys. Acta">
        <title>Involvement of glutathione peroxidase 1 in growth and peroxisome formation in Saccharomyces cerevisiae in oleic acid medium.</title>
        <authorList>
            <person name="Ohdate T."/>
            <person name="Inoue Y."/>
        </authorList>
    </citation>
    <scope>SUBCELLULAR LOCATION</scope>
</reference>
<reference key="16">
    <citation type="journal article" date="2012" name="Mol. Cell. Proteomics">
        <title>Intermembrane space proteome of yeast mitochondria.</title>
        <authorList>
            <person name="Voegtle F.N."/>
            <person name="Burkhart J.M."/>
            <person name="Rao S."/>
            <person name="Gerbeth C."/>
            <person name="Hinrichs J."/>
            <person name="Martinou J.C."/>
            <person name="Chacinska A."/>
            <person name="Sickmann A."/>
            <person name="Zahedi R.P."/>
            <person name="Meisinger C."/>
        </authorList>
    </citation>
    <scope>IDENTIFICATION BY MASS SPECTROMETRY</scope>
    <scope>SUBCELLULAR LOCATION [LARGE SCALE ANALYSIS]</scope>
</reference>
<reference key="17">
    <citation type="journal article" date="2008" name="Proteins">
        <title>Crystal structure of glutathione-dependent phospholipid peroxidase Hyr1 from the yeast Saccharomyces cerevisiae.</title>
        <authorList>
            <person name="Zhang W.J."/>
            <person name="He Y.-X."/>
            <person name="Yang Z."/>
            <person name="Yu J."/>
            <person name="Chen Y."/>
            <person name="Zhou C.-Z."/>
        </authorList>
    </citation>
    <scope>X-RAY CRYSTALLOGRAPHY (2.02 ANGSTROMS)</scope>
    <scope>CATALYTIC ACTIVITY</scope>
    <scope>MUTAGENESIS OF CYS-82</scope>
</reference>